<dbReference type="EC" id="1.2.4.2" evidence="1"/>
<dbReference type="EMBL" id="X52433">
    <property type="protein sequence ID" value="CAA36680.1"/>
    <property type="molecule type" value="Genomic_DNA"/>
</dbReference>
<dbReference type="EMBL" id="X52432">
    <property type="protein sequence ID" value="CAA36677.1"/>
    <property type="molecule type" value="Genomic_DNA"/>
</dbReference>
<dbReference type="PIR" id="S07776">
    <property type="entry name" value="S07776"/>
</dbReference>
<dbReference type="SMR" id="P20707"/>
<dbReference type="SABIO-RK" id="P20707"/>
<dbReference type="GO" id="GO:0005829">
    <property type="term" value="C:cytosol"/>
    <property type="evidence" value="ECO:0007669"/>
    <property type="project" value="TreeGrafter"/>
</dbReference>
<dbReference type="GO" id="GO:0045252">
    <property type="term" value="C:oxoglutarate dehydrogenase complex"/>
    <property type="evidence" value="ECO:0007669"/>
    <property type="project" value="TreeGrafter"/>
</dbReference>
<dbReference type="GO" id="GO:0004591">
    <property type="term" value="F:oxoglutarate dehydrogenase (succinyl-transferring) activity"/>
    <property type="evidence" value="ECO:0007669"/>
    <property type="project" value="UniProtKB-EC"/>
</dbReference>
<dbReference type="GO" id="GO:0030976">
    <property type="term" value="F:thiamine pyrophosphate binding"/>
    <property type="evidence" value="ECO:0007669"/>
    <property type="project" value="InterPro"/>
</dbReference>
<dbReference type="GO" id="GO:0006096">
    <property type="term" value="P:glycolytic process"/>
    <property type="evidence" value="ECO:0007669"/>
    <property type="project" value="UniProtKB-KW"/>
</dbReference>
<dbReference type="GO" id="GO:0006099">
    <property type="term" value="P:tricarboxylic acid cycle"/>
    <property type="evidence" value="ECO:0007669"/>
    <property type="project" value="TreeGrafter"/>
</dbReference>
<dbReference type="CDD" id="cd02016">
    <property type="entry name" value="TPP_E1_OGDC_like"/>
    <property type="match status" value="1"/>
</dbReference>
<dbReference type="FunFam" id="1.10.287.1150:FF:000004">
    <property type="entry name" value="2-oxoglutarate dehydrogenase E1 component"/>
    <property type="match status" value="1"/>
</dbReference>
<dbReference type="FunFam" id="3.40.50.970:FF:000014">
    <property type="entry name" value="2-oxoglutarate dehydrogenase E1 component"/>
    <property type="match status" value="1"/>
</dbReference>
<dbReference type="Gene3D" id="3.40.50.12470">
    <property type="match status" value="1"/>
</dbReference>
<dbReference type="Gene3D" id="3.40.50.970">
    <property type="match status" value="1"/>
</dbReference>
<dbReference type="Gene3D" id="3.40.50.11610">
    <property type="entry name" value="Multifunctional 2-oxoglutarate metabolism enzyme, C-terminal domain"/>
    <property type="match status" value="1"/>
</dbReference>
<dbReference type="Gene3D" id="1.10.287.1150">
    <property type="entry name" value="TPP helical domain"/>
    <property type="match status" value="1"/>
</dbReference>
<dbReference type="InterPro" id="IPR032106">
    <property type="entry name" value="2-oxogl_dehyd_N"/>
</dbReference>
<dbReference type="InterPro" id="IPR011603">
    <property type="entry name" value="2oxoglutarate_DH_E1"/>
</dbReference>
<dbReference type="InterPro" id="IPR001017">
    <property type="entry name" value="DH_E1"/>
</dbReference>
<dbReference type="InterPro" id="IPR042179">
    <property type="entry name" value="KGD_C_sf"/>
</dbReference>
<dbReference type="InterPro" id="IPR031717">
    <property type="entry name" value="ODO-1/KGD_C"/>
</dbReference>
<dbReference type="InterPro" id="IPR029061">
    <property type="entry name" value="THDP-binding"/>
</dbReference>
<dbReference type="InterPro" id="IPR005475">
    <property type="entry name" value="Transketolase-like_Pyr-bd"/>
</dbReference>
<dbReference type="NCBIfam" id="TIGR00239">
    <property type="entry name" value="2oxo_dh_E1"/>
    <property type="match status" value="1"/>
</dbReference>
<dbReference type="NCBIfam" id="NF006914">
    <property type="entry name" value="PRK09404.1"/>
    <property type="match status" value="1"/>
</dbReference>
<dbReference type="NCBIfam" id="NF008907">
    <property type="entry name" value="PRK12270.1"/>
    <property type="match status" value="1"/>
</dbReference>
<dbReference type="PANTHER" id="PTHR23152:SF4">
    <property type="entry name" value="2-OXOADIPATE DEHYDROGENASE COMPLEX COMPONENT E1"/>
    <property type="match status" value="1"/>
</dbReference>
<dbReference type="PANTHER" id="PTHR23152">
    <property type="entry name" value="2-OXOGLUTARATE DEHYDROGENASE"/>
    <property type="match status" value="1"/>
</dbReference>
<dbReference type="Pfam" id="PF16078">
    <property type="entry name" value="2-oxogl_dehyd_N"/>
    <property type="match status" value="1"/>
</dbReference>
<dbReference type="Pfam" id="PF00676">
    <property type="entry name" value="E1_dh"/>
    <property type="match status" value="1"/>
</dbReference>
<dbReference type="Pfam" id="PF16870">
    <property type="entry name" value="OxoGdeHyase_C"/>
    <property type="match status" value="1"/>
</dbReference>
<dbReference type="Pfam" id="PF02779">
    <property type="entry name" value="Transket_pyr"/>
    <property type="match status" value="1"/>
</dbReference>
<dbReference type="PIRSF" id="PIRSF000157">
    <property type="entry name" value="Oxoglu_dh_E1"/>
    <property type="match status" value="1"/>
</dbReference>
<dbReference type="SMART" id="SM00861">
    <property type="entry name" value="Transket_pyr"/>
    <property type="match status" value="1"/>
</dbReference>
<dbReference type="SUPFAM" id="SSF52518">
    <property type="entry name" value="Thiamin diphosphate-binding fold (THDP-binding)"/>
    <property type="match status" value="2"/>
</dbReference>
<comment type="function">
    <text evidence="1">E1 component of the 2-oxoglutarate dehydrogenase (OGDH) complex which catalyzes the decarboxylation of 2-oxoglutarate, the first step in the conversion of 2-oxoglutarate to succinyl-CoA and CO(2).</text>
</comment>
<comment type="catalytic activity">
    <reaction evidence="1">
        <text>N(6)-[(R)-lipoyl]-L-lysyl-[protein] + 2-oxoglutarate + H(+) = N(6)-[(R)-S(8)-succinyldihydrolipoyl]-L-lysyl-[protein] + CO2</text>
        <dbReference type="Rhea" id="RHEA:12188"/>
        <dbReference type="Rhea" id="RHEA-COMP:10474"/>
        <dbReference type="Rhea" id="RHEA-COMP:20092"/>
        <dbReference type="ChEBI" id="CHEBI:15378"/>
        <dbReference type="ChEBI" id="CHEBI:16526"/>
        <dbReference type="ChEBI" id="CHEBI:16810"/>
        <dbReference type="ChEBI" id="CHEBI:83099"/>
        <dbReference type="ChEBI" id="CHEBI:83120"/>
        <dbReference type="EC" id="1.2.4.2"/>
    </reaction>
</comment>
<comment type="cofactor">
    <cofactor evidence="1">
        <name>thiamine diphosphate</name>
        <dbReference type="ChEBI" id="CHEBI:58937"/>
    </cofactor>
</comment>
<comment type="subunit">
    <text evidence="1">Homodimer. Part of the 2-oxoglutarate dehydrogenase (OGDH) complex composed of E1 (2-oxoglutarate dehydrogenase), E2 (dihydrolipoamide succinyltransferase) and E3 (dihydrolipoamide dehydrogenase); the complex contains multiple copies of the three enzymatic components (E1, E2 and E3).</text>
</comment>
<comment type="similarity">
    <text evidence="2">Belongs to the alpha-ketoglutarate dehydrogenase family.</text>
</comment>
<evidence type="ECO:0000250" key="1">
    <source>
        <dbReference type="UniProtKB" id="P0AFG3"/>
    </source>
</evidence>
<evidence type="ECO:0000305" key="2"/>
<reference key="1">
    <citation type="journal article" date="1990" name="Eur. J. Biochem.">
        <title>The 2-oxoglutarate dehydrogenase complex from Azotobacter vinelandii. 1. Molecular cloning and sequence analysis of the gene encoding the 2-oxoglutarate dehydrogenase component.</title>
        <authorList>
            <person name="Schulze E."/>
            <person name="Westphal A.H."/>
            <person name="Hanemaaijer R."/>
            <person name="de Kok A."/>
        </authorList>
    </citation>
    <scope>NUCLEOTIDE SEQUENCE [GENOMIC DNA]</scope>
</reference>
<reference key="2">
    <citation type="journal article" date="1990" name="Eur. J. Biochem.">
        <title>The 2-oxoglutarate dehydrogenase complex from Azotobacter vinelandii. 2. Molecular cloning and sequence analysis of the gene encoding the succinyltransferase component.</title>
        <authorList>
            <person name="Westphal A.H."/>
            <person name="de Kok A."/>
        </authorList>
    </citation>
    <scope>NUCLEOTIDE SEQUENCE [GENOMIC DNA] OF 909-943</scope>
</reference>
<proteinExistence type="inferred from homology"/>
<gene>
    <name type="primary">sucA</name>
    <name type="synonym">odhA</name>
</gene>
<protein>
    <recommendedName>
        <fullName>2-oxoglutarate dehydrogenase E1 component</fullName>
        <ecNumber evidence="1">1.2.4.2</ecNumber>
    </recommendedName>
    <alternativeName>
        <fullName>Alpha-ketoglutarate dehydrogenase</fullName>
    </alternativeName>
</protein>
<keyword id="KW-0324">Glycolysis</keyword>
<keyword id="KW-0560">Oxidoreductase</keyword>
<keyword id="KW-0786">Thiamine pyrophosphate</keyword>
<organism>
    <name type="scientific">Azotobacter vinelandii</name>
    <dbReference type="NCBI Taxonomy" id="354"/>
    <lineage>
        <taxon>Bacteria</taxon>
        <taxon>Pseudomonadati</taxon>
        <taxon>Pseudomonadota</taxon>
        <taxon>Gammaproteobacteria</taxon>
        <taxon>Pseudomonadales</taxon>
        <taxon>Pseudomonadaceae</taxon>
        <taxon>Azotobacter</taxon>
    </lineage>
</organism>
<accession>P20707</accession>
<feature type="chain" id="PRO_0000162186" description="2-oxoglutarate dehydrogenase E1 component">
    <location>
        <begin position="1"/>
        <end position="943"/>
    </location>
</feature>
<sequence length="943" mass="105688">MQDSVMQRMWNSAHLSGGNAAYVEELYELYLHDPNAVPEEWRTYFEKLPAEAGTSTDVPHAPVRDQFVLLAKNQRRAQPVATSSVSTEHEKKQVEVLRLIQAYRTRGHQASQLDPLGLWQRTAPSDLSITHYGLTNADLDTPFRTGELYIGKEEATLREILQALQETYCRTIGAEFTHIVDSEQRNWFAQRLESVRGRPVYSKEAKSHLLERLSAAEGLEKYLGTKYPGTKRFGLEGGESLVPVVDEIIQRSGSYGTKEVVIGMAHRGRLNLLVNALGKNPRDLFDEFEGKHLVELGSGDVKYHQGFSSNVMTSGGEVHLAMAFNPSHLEIVSPVVEGSVRARQDRRVDATGEKVVPISIHGDSAFAGQGVVMETFQMSQIRGYKTGGTIHIVVNNQVGFTTSNPVDTRSTEYCTDPAKMIQAPVLHVNGDDPEAVLFVTQLAVDYRMQFKRDVVIDLVCYRRRGHNEADEPSGTQPLMYQKIAKQPTTRELYADALVKEGSLSQEEVQAKVDEYRTALDNGQHVLKSLVKEPNTELFVDWTPYLGHAWTARHDTSFELKTLQELNAKLLQIPEGFVVQRQVAKILEDRGRMGVGAMPINWGCAETLAYATLLKEGHPVRITGQDVGRGTFSHRHAALHNQKDASRYIPLQNLYEGQPKFELYDSFLSEEAVLAFEYGYATTTPNALVIWEASSGDFANGAQVVIDQFISSGETKWGALCGLTMLLPHGYEGQGPEHSSARLERYLQLCAEQNIQVCVPTTPAQVYHMLRRQVIRPLRKPLVALTPKSLLRHKSAISTLEDLALGSFHPVLPEVDSLDPKKVERLVLCSGKVYYDLLDKRHAEGREDIAIVRIEQLYPFPEEELAEVMAPYTNLKHVVWCQEEPMNQGAWYCSQHHMRRVASAHKKELFLQYAGREASAAPACGYASMHAEQQEKLLQDAFTV</sequence>
<name>ODO1_AZOVI</name>